<name>RSGA_LACLA</name>
<sequence>MIKNGRIVKSLAGFYDVESEGEVYQTRARGNFRKKGMKPVVGDFVEFSTEENSEGYILKIGERKNSLIRPSIANIDQAVIIMSTVSPNFSLNLLDRFLVFLEHKNIHPMIYISKLDLLTEMQEGSDKNKKTFNQLTDYEQIKSDYEQIGYDVFFDAEHLVSNLAGKVTVFMGQTGAGKTTLLNKIAPEMQLATGETSEKLGRGRHTTRHVEFFELAGGLIADTPGFSSLDYEVTNRPDLNAAFPEILRISHDCKFRECTHTHEPSCAVKLALENHEILESRYDNYLQILDEINHTRETYEKKRKKQG</sequence>
<reference key="1">
    <citation type="journal article" date="2001" name="Genome Res.">
        <title>The complete genome sequence of the lactic acid bacterium Lactococcus lactis ssp. lactis IL1403.</title>
        <authorList>
            <person name="Bolotin A."/>
            <person name="Wincker P."/>
            <person name="Mauger S."/>
            <person name="Jaillon O."/>
            <person name="Malarme K."/>
            <person name="Weissenbach J."/>
            <person name="Ehrlich S.D."/>
            <person name="Sorokin A."/>
        </authorList>
    </citation>
    <scope>NUCLEOTIDE SEQUENCE [LARGE SCALE GENOMIC DNA]</scope>
    <source>
        <strain>IL1403</strain>
    </source>
</reference>
<keyword id="KW-0963">Cytoplasm</keyword>
<keyword id="KW-0342">GTP-binding</keyword>
<keyword id="KW-0378">Hydrolase</keyword>
<keyword id="KW-0479">Metal-binding</keyword>
<keyword id="KW-0547">Nucleotide-binding</keyword>
<keyword id="KW-1185">Reference proteome</keyword>
<keyword id="KW-0690">Ribosome biogenesis</keyword>
<keyword id="KW-0694">RNA-binding</keyword>
<keyword id="KW-0699">rRNA-binding</keyword>
<keyword id="KW-0862">Zinc</keyword>
<organism>
    <name type="scientific">Lactococcus lactis subsp. lactis (strain IL1403)</name>
    <name type="common">Streptococcus lactis</name>
    <dbReference type="NCBI Taxonomy" id="272623"/>
    <lineage>
        <taxon>Bacteria</taxon>
        <taxon>Bacillati</taxon>
        <taxon>Bacillota</taxon>
        <taxon>Bacilli</taxon>
        <taxon>Lactobacillales</taxon>
        <taxon>Streptococcaceae</taxon>
        <taxon>Lactococcus</taxon>
    </lineage>
</organism>
<evidence type="ECO:0000255" key="1">
    <source>
        <dbReference type="HAMAP-Rule" id="MF_01820"/>
    </source>
</evidence>
<evidence type="ECO:0000255" key="2">
    <source>
        <dbReference type="PROSITE-ProRule" id="PRU01058"/>
    </source>
</evidence>
<proteinExistence type="inferred from homology"/>
<dbReference type="EC" id="3.6.1.-" evidence="1"/>
<dbReference type="EMBL" id="AE005176">
    <property type="protein sequence ID" value="AAK06024.1"/>
    <property type="molecule type" value="Genomic_DNA"/>
</dbReference>
<dbReference type="PIR" id="F86865">
    <property type="entry name" value="F86865"/>
</dbReference>
<dbReference type="RefSeq" id="NP_268083.1">
    <property type="nucleotide sequence ID" value="NC_002662.1"/>
</dbReference>
<dbReference type="RefSeq" id="WP_010906200.1">
    <property type="nucleotide sequence ID" value="NC_002662.1"/>
</dbReference>
<dbReference type="SMR" id="Q9CEB7"/>
<dbReference type="PaxDb" id="272623-L187815"/>
<dbReference type="EnsemblBacteria" id="AAK06024">
    <property type="protein sequence ID" value="AAK06024"/>
    <property type="gene ID" value="L187815"/>
</dbReference>
<dbReference type="KEGG" id="lla:L187815"/>
<dbReference type="PATRIC" id="fig|272623.7.peg.2070"/>
<dbReference type="eggNOG" id="COG1162">
    <property type="taxonomic scope" value="Bacteria"/>
</dbReference>
<dbReference type="HOGENOM" id="CLU_033617_2_1_9"/>
<dbReference type="OrthoDB" id="9809485at2"/>
<dbReference type="Proteomes" id="UP000002196">
    <property type="component" value="Chromosome"/>
</dbReference>
<dbReference type="GO" id="GO:0005737">
    <property type="term" value="C:cytoplasm"/>
    <property type="evidence" value="ECO:0007669"/>
    <property type="project" value="UniProtKB-SubCell"/>
</dbReference>
<dbReference type="GO" id="GO:0005525">
    <property type="term" value="F:GTP binding"/>
    <property type="evidence" value="ECO:0007669"/>
    <property type="project" value="UniProtKB-UniRule"/>
</dbReference>
<dbReference type="GO" id="GO:0003924">
    <property type="term" value="F:GTPase activity"/>
    <property type="evidence" value="ECO:0007669"/>
    <property type="project" value="UniProtKB-UniRule"/>
</dbReference>
<dbReference type="GO" id="GO:0046872">
    <property type="term" value="F:metal ion binding"/>
    <property type="evidence" value="ECO:0007669"/>
    <property type="project" value="UniProtKB-KW"/>
</dbReference>
<dbReference type="GO" id="GO:0019843">
    <property type="term" value="F:rRNA binding"/>
    <property type="evidence" value="ECO:0007669"/>
    <property type="project" value="UniProtKB-KW"/>
</dbReference>
<dbReference type="GO" id="GO:0042274">
    <property type="term" value="P:ribosomal small subunit biogenesis"/>
    <property type="evidence" value="ECO:0007669"/>
    <property type="project" value="UniProtKB-UniRule"/>
</dbReference>
<dbReference type="CDD" id="cd04466">
    <property type="entry name" value="S1_YloQ_GTPase"/>
    <property type="match status" value="1"/>
</dbReference>
<dbReference type="CDD" id="cd01854">
    <property type="entry name" value="YjeQ_EngC"/>
    <property type="match status" value="1"/>
</dbReference>
<dbReference type="Gene3D" id="2.40.50.140">
    <property type="entry name" value="Nucleic acid-binding proteins"/>
    <property type="match status" value="1"/>
</dbReference>
<dbReference type="Gene3D" id="3.40.50.300">
    <property type="entry name" value="P-loop containing nucleotide triphosphate hydrolases"/>
    <property type="match status" value="1"/>
</dbReference>
<dbReference type="Gene3D" id="1.10.40.50">
    <property type="entry name" value="Probable gtpase engc, domain 3"/>
    <property type="match status" value="1"/>
</dbReference>
<dbReference type="HAMAP" id="MF_01820">
    <property type="entry name" value="GTPase_RsgA"/>
    <property type="match status" value="1"/>
</dbReference>
<dbReference type="InterPro" id="IPR030378">
    <property type="entry name" value="G_CP_dom"/>
</dbReference>
<dbReference type="InterPro" id="IPR012340">
    <property type="entry name" value="NA-bd_OB-fold"/>
</dbReference>
<dbReference type="InterPro" id="IPR027417">
    <property type="entry name" value="P-loop_NTPase"/>
</dbReference>
<dbReference type="InterPro" id="IPR004881">
    <property type="entry name" value="Ribosome_biogen_GTPase_RsgA"/>
</dbReference>
<dbReference type="InterPro" id="IPR010914">
    <property type="entry name" value="RsgA_GTPase_dom"/>
</dbReference>
<dbReference type="InterPro" id="IPR031944">
    <property type="entry name" value="RsgA_N"/>
</dbReference>
<dbReference type="NCBIfam" id="TIGR00157">
    <property type="entry name" value="ribosome small subunit-dependent GTPase A"/>
    <property type="match status" value="1"/>
</dbReference>
<dbReference type="PANTHER" id="PTHR32120">
    <property type="entry name" value="SMALL RIBOSOMAL SUBUNIT BIOGENESIS GTPASE RSGA"/>
    <property type="match status" value="1"/>
</dbReference>
<dbReference type="PANTHER" id="PTHR32120:SF11">
    <property type="entry name" value="SMALL RIBOSOMAL SUBUNIT BIOGENESIS GTPASE RSGA 1, MITOCHONDRIAL-RELATED"/>
    <property type="match status" value="1"/>
</dbReference>
<dbReference type="Pfam" id="PF03193">
    <property type="entry name" value="RsgA_GTPase"/>
    <property type="match status" value="1"/>
</dbReference>
<dbReference type="Pfam" id="PF16745">
    <property type="entry name" value="RsgA_N"/>
    <property type="match status" value="1"/>
</dbReference>
<dbReference type="SUPFAM" id="SSF50249">
    <property type="entry name" value="Nucleic acid-binding proteins"/>
    <property type="match status" value="1"/>
</dbReference>
<dbReference type="SUPFAM" id="SSF52540">
    <property type="entry name" value="P-loop containing nucleoside triphosphate hydrolases"/>
    <property type="match status" value="1"/>
</dbReference>
<dbReference type="PROSITE" id="PS50936">
    <property type="entry name" value="ENGC_GTPASE"/>
    <property type="match status" value="1"/>
</dbReference>
<dbReference type="PROSITE" id="PS51721">
    <property type="entry name" value="G_CP"/>
    <property type="match status" value="1"/>
</dbReference>
<comment type="function">
    <text evidence="1">One of several proteins that assist in the late maturation steps of the functional core of the 30S ribosomal subunit. Helps release RbfA from mature subunits. May play a role in the assembly of ribosomal proteins into the subunit. Circularly permuted GTPase that catalyzes slow GTP hydrolysis, GTPase activity is stimulated by the 30S ribosomal subunit.</text>
</comment>
<comment type="cofactor">
    <cofactor evidence="1">
        <name>Zn(2+)</name>
        <dbReference type="ChEBI" id="CHEBI:29105"/>
    </cofactor>
    <text evidence="1">Binds 1 zinc ion per subunit.</text>
</comment>
<comment type="subunit">
    <text evidence="1">Monomer. Associates with 30S ribosomal subunit, binds 16S rRNA.</text>
</comment>
<comment type="subcellular location">
    <subcellularLocation>
        <location evidence="1">Cytoplasm</location>
    </subcellularLocation>
</comment>
<comment type="similarity">
    <text evidence="1">Belongs to the TRAFAC class YlqF/YawG GTPase family. RsgA subfamily.</text>
</comment>
<gene>
    <name evidence="1" type="primary">rsgA</name>
    <name type="ordered locus">LL1926</name>
    <name type="ORF">L187815</name>
</gene>
<protein>
    <recommendedName>
        <fullName evidence="1">Small ribosomal subunit biogenesis GTPase RsgA</fullName>
        <ecNumber evidence="1">3.6.1.-</ecNumber>
    </recommendedName>
</protein>
<feature type="chain" id="PRO_0000171482" description="Small ribosomal subunit biogenesis GTPase RsgA">
    <location>
        <begin position="1"/>
        <end position="307"/>
    </location>
</feature>
<feature type="domain" description="CP-type G" evidence="2">
    <location>
        <begin position="64"/>
        <end position="229"/>
    </location>
</feature>
<feature type="binding site" evidence="1">
    <location>
        <begin position="113"/>
        <end position="116"/>
    </location>
    <ligand>
        <name>GTP</name>
        <dbReference type="ChEBI" id="CHEBI:37565"/>
    </ligand>
</feature>
<feature type="binding site" evidence="1">
    <location>
        <begin position="172"/>
        <end position="180"/>
    </location>
    <ligand>
        <name>GTP</name>
        <dbReference type="ChEBI" id="CHEBI:37565"/>
    </ligand>
</feature>
<feature type="binding site" evidence="1">
    <location>
        <position position="253"/>
    </location>
    <ligand>
        <name>Zn(2+)</name>
        <dbReference type="ChEBI" id="CHEBI:29105"/>
    </ligand>
</feature>
<feature type="binding site" evidence="1">
    <location>
        <position position="258"/>
    </location>
    <ligand>
        <name>Zn(2+)</name>
        <dbReference type="ChEBI" id="CHEBI:29105"/>
    </ligand>
</feature>
<feature type="binding site" evidence="1">
    <location>
        <position position="260"/>
    </location>
    <ligand>
        <name>Zn(2+)</name>
        <dbReference type="ChEBI" id="CHEBI:29105"/>
    </ligand>
</feature>
<feature type="binding site" evidence="1">
    <location>
        <position position="266"/>
    </location>
    <ligand>
        <name>Zn(2+)</name>
        <dbReference type="ChEBI" id="CHEBI:29105"/>
    </ligand>
</feature>
<accession>Q9CEB7</accession>